<keyword id="KW-0235">DNA replication</keyword>
<keyword id="KW-1043">Host membrane</keyword>
<keyword id="KW-0408">Iron</keyword>
<keyword id="KW-0472">Membrane</keyword>
<keyword id="KW-0479">Metal-binding</keyword>
<keyword id="KW-0560">Oxidoreductase</keyword>
<keyword id="KW-1185">Reference proteome</keyword>
<keyword id="KW-0812">Transmembrane</keyword>
<keyword id="KW-1133">Transmembrane helix</keyword>
<keyword id="KW-1251">Viral latency</keyword>
<keyword id="KW-1272">Viral reactivation from latency</keyword>
<accession>P09247</accession>
<proteinExistence type="inferred from homology"/>
<name>RIR2_VZVD</name>
<sequence>MDQKDCSHFFYRPECPDINNLRALSISNRWLESDFIIEDDYQYLDCLTEDELIFYRFIFTFLSAADDLVNVNLGSLTQLFSQKDIHHYYIEQECIEVVHARVYSQIQLMLFRGDESLRVQYVNVTINNPSIQQKVQWLEEKVRDNPSVAEKYILMILIEGIFFVSSFAAIAYLRNNGLFVVTCQFNDLISRDEAIHTSASCCIYNNYVPEKPAITRIHQLFSEAVEIECAFLKSHAPKTRLVNVDAITQYVKFSADRLLSAINVPKLFNTPPPDSDFPLAFMIADKNTNFFERHSTSYAGTVINDL</sequence>
<dbReference type="EC" id="1.17.4.1" evidence="1"/>
<dbReference type="EMBL" id="X04370">
    <property type="protein sequence ID" value="CAA27901.1"/>
    <property type="molecule type" value="Genomic_DNA"/>
</dbReference>
<dbReference type="PIR" id="I27342">
    <property type="entry name" value="WMBE18"/>
</dbReference>
<dbReference type="SMR" id="P09247"/>
<dbReference type="Proteomes" id="UP000002602">
    <property type="component" value="Genome"/>
</dbReference>
<dbReference type="GO" id="GO:0033644">
    <property type="term" value="C:host cell membrane"/>
    <property type="evidence" value="ECO:0007669"/>
    <property type="project" value="UniProtKB-SubCell"/>
</dbReference>
<dbReference type="GO" id="GO:0016020">
    <property type="term" value="C:membrane"/>
    <property type="evidence" value="ECO:0007669"/>
    <property type="project" value="UniProtKB-KW"/>
</dbReference>
<dbReference type="GO" id="GO:0046872">
    <property type="term" value="F:metal ion binding"/>
    <property type="evidence" value="ECO:0007669"/>
    <property type="project" value="UniProtKB-KW"/>
</dbReference>
<dbReference type="GO" id="GO:0004748">
    <property type="term" value="F:ribonucleoside-diphosphate reductase activity, thioredoxin disulfide as acceptor"/>
    <property type="evidence" value="ECO:0007669"/>
    <property type="project" value="UniProtKB-EC"/>
</dbReference>
<dbReference type="GO" id="GO:0009263">
    <property type="term" value="P:deoxyribonucleotide biosynthetic process"/>
    <property type="evidence" value="ECO:0007669"/>
    <property type="project" value="InterPro"/>
</dbReference>
<dbReference type="GO" id="GO:0006260">
    <property type="term" value="P:DNA replication"/>
    <property type="evidence" value="ECO:0007669"/>
    <property type="project" value="UniProtKB-KW"/>
</dbReference>
<dbReference type="GO" id="GO:0019046">
    <property type="term" value="P:release from viral latency"/>
    <property type="evidence" value="ECO:0007669"/>
    <property type="project" value="UniProtKB-KW"/>
</dbReference>
<dbReference type="CDD" id="cd01049">
    <property type="entry name" value="RNRR2"/>
    <property type="match status" value="1"/>
</dbReference>
<dbReference type="Gene3D" id="1.10.620.20">
    <property type="entry name" value="Ribonucleotide Reductase, subunit A"/>
    <property type="match status" value="1"/>
</dbReference>
<dbReference type="HAMAP" id="MF_04028">
    <property type="entry name" value="HSV_RIR2"/>
    <property type="match status" value="1"/>
</dbReference>
<dbReference type="InterPro" id="IPR009078">
    <property type="entry name" value="Ferritin-like_SF"/>
</dbReference>
<dbReference type="InterPro" id="IPR034715">
    <property type="entry name" value="HSV_RIR2"/>
</dbReference>
<dbReference type="InterPro" id="IPR012348">
    <property type="entry name" value="RNR-like"/>
</dbReference>
<dbReference type="InterPro" id="IPR033909">
    <property type="entry name" value="RNR_small"/>
</dbReference>
<dbReference type="InterPro" id="IPR030475">
    <property type="entry name" value="RNR_small_AS"/>
</dbReference>
<dbReference type="InterPro" id="IPR000358">
    <property type="entry name" value="RNR_small_fam"/>
</dbReference>
<dbReference type="PANTHER" id="PTHR23409">
    <property type="entry name" value="RIBONUCLEOSIDE-DIPHOSPHATE REDUCTASE SMALL CHAIN"/>
    <property type="match status" value="1"/>
</dbReference>
<dbReference type="PANTHER" id="PTHR23409:SF18">
    <property type="entry name" value="RIBONUCLEOSIDE-DIPHOSPHATE REDUCTASE SUBUNIT M2"/>
    <property type="match status" value="1"/>
</dbReference>
<dbReference type="Pfam" id="PF00268">
    <property type="entry name" value="Ribonuc_red_sm"/>
    <property type="match status" value="1"/>
</dbReference>
<dbReference type="SUPFAM" id="SSF47240">
    <property type="entry name" value="Ferritin-like"/>
    <property type="match status" value="1"/>
</dbReference>
<dbReference type="PROSITE" id="PS00368">
    <property type="entry name" value="RIBORED_SMALL"/>
    <property type="match status" value="1"/>
</dbReference>
<protein>
    <recommendedName>
        <fullName evidence="1">Ribonucleoside-diphosphate reductase small subunit</fullName>
        <ecNumber evidence="1">1.17.4.1</ecNumber>
    </recommendedName>
    <alternativeName>
        <fullName evidence="1">Ribonucleotide reductase small subunit</fullName>
    </alternativeName>
</protein>
<reference key="1">
    <citation type="journal article" date="1986" name="J. Gen. Virol.">
        <title>The complete DNA sequence of varicella-zoster virus.</title>
        <authorList>
            <person name="Davison A.J."/>
            <person name="Scott J.E."/>
        </authorList>
    </citation>
    <scope>NUCLEOTIDE SEQUENCE [LARGE SCALE GENOMIC DNA]</scope>
</reference>
<reference key="2">
    <citation type="journal article" date="2009" name="Trends Biochem. Sci.">
        <title>Tinkering with a viral ribonucleotide reductase.</title>
        <authorList>
            <person name="Lembo D."/>
            <person name="Brune W."/>
        </authorList>
    </citation>
    <scope>REVIEW</scope>
</reference>
<organism>
    <name type="scientific">Varicella-zoster virus (strain Dumas)</name>
    <name type="common">HHV-3</name>
    <name type="synonym">Human herpesvirus 3</name>
    <dbReference type="NCBI Taxonomy" id="10338"/>
    <lineage>
        <taxon>Viruses</taxon>
        <taxon>Duplodnaviria</taxon>
        <taxon>Heunggongvirae</taxon>
        <taxon>Peploviricota</taxon>
        <taxon>Herviviricetes</taxon>
        <taxon>Herpesvirales</taxon>
        <taxon>Orthoherpesviridae</taxon>
        <taxon>Alphaherpesvirinae</taxon>
        <taxon>Varicellovirus</taxon>
        <taxon>Varicellovirus humanalpha3</taxon>
        <taxon>Human herpesvirus 3</taxon>
    </lineage>
</organism>
<comment type="function">
    <text evidence="1">Ribonucleoside-diphosphate reductase holoenzyme provides the precursors necessary for viral DNA synthesis. Allows virus growth in non-dividing cells, as well as reactivation from latency in infected hosts. Catalyzes the biosynthesis of deoxyribonucleotides from the corresponding ribonucleotides.</text>
</comment>
<comment type="catalytic activity">
    <reaction evidence="1">
        <text>a 2'-deoxyribonucleoside 5'-diphosphate + [thioredoxin]-disulfide + H2O = a ribonucleoside 5'-diphosphate + [thioredoxin]-dithiol</text>
        <dbReference type="Rhea" id="RHEA:23252"/>
        <dbReference type="Rhea" id="RHEA-COMP:10698"/>
        <dbReference type="Rhea" id="RHEA-COMP:10700"/>
        <dbReference type="ChEBI" id="CHEBI:15377"/>
        <dbReference type="ChEBI" id="CHEBI:29950"/>
        <dbReference type="ChEBI" id="CHEBI:50058"/>
        <dbReference type="ChEBI" id="CHEBI:57930"/>
        <dbReference type="ChEBI" id="CHEBI:73316"/>
        <dbReference type="EC" id="1.17.4.1"/>
    </reaction>
</comment>
<comment type="cofactor">
    <cofactor evidence="1">
        <name>Fe cation</name>
        <dbReference type="ChEBI" id="CHEBI:24875"/>
    </cofactor>
</comment>
<comment type="subunit">
    <text evidence="1">Heterotetramer composed of a homodimer of the large subunit (R1) and a homodimer of the small subunit (R2). Larger multisubunit protein complex are also active, composed of (R1)n(R2)n.</text>
</comment>
<comment type="subcellular location">
    <subcellularLocation>
        <location evidence="1">Host membrane</location>
        <topology evidence="1">Single-pass membrane protein</topology>
    </subcellularLocation>
</comment>
<comment type="similarity">
    <text evidence="1">Belongs to the ribonucleoside diphosphate reductase small chain family.</text>
</comment>
<organismHost>
    <name type="scientific">Homo sapiens</name>
    <name type="common">Human</name>
    <dbReference type="NCBI Taxonomy" id="9606"/>
</organismHost>
<evidence type="ECO:0000255" key="1">
    <source>
        <dbReference type="HAMAP-Rule" id="MF_04028"/>
    </source>
</evidence>
<gene>
    <name evidence="1" type="primary">RIR2</name>
    <name type="ORF">ORF18</name>
</gene>
<feature type="chain" id="PRO_0000190512" description="Ribonucleoside-diphosphate reductase small subunit">
    <location>
        <begin position="1"/>
        <end position="306"/>
    </location>
</feature>
<feature type="transmembrane region" description="Helical" evidence="1">
    <location>
        <begin position="153"/>
        <end position="173"/>
    </location>
</feature>
<feature type="active site" evidence="1">
    <location>
        <position position="103"/>
    </location>
</feature>
<feature type="binding site" evidence="1">
    <location>
        <position position="66"/>
    </location>
    <ligand>
        <name>Fe cation</name>
        <dbReference type="ChEBI" id="CHEBI:24875"/>
        <label>1</label>
    </ligand>
</feature>
<feature type="binding site" evidence="1">
    <location>
        <position position="96"/>
    </location>
    <ligand>
        <name>Fe cation</name>
        <dbReference type="ChEBI" id="CHEBI:24875"/>
        <label>1</label>
    </ligand>
</feature>
<feature type="binding site" evidence="1">
    <location>
        <position position="96"/>
    </location>
    <ligand>
        <name>Fe cation</name>
        <dbReference type="ChEBI" id="CHEBI:24875"/>
        <label>2</label>
    </ligand>
</feature>
<feature type="binding site" evidence="1">
    <location>
        <position position="99"/>
    </location>
    <ligand>
        <name>Fe cation</name>
        <dbReference type="ChEBI" id="CHEBI:24875"/>
        <label>1</label>
    </ligand>
</feature>
<feature type="binding site" evidence="1">
    <location>
        <position position="159"/>
    </location>
    <ligand>
        <name>Fe cation</name>
        <dbReference type="ChEBI" id="CHEBI:24875"/>
        <label>2</label>
    </ligand>
</feature>
<feature type="binding site" evidence="1">
    <location>
        <position position="193"/>
    </location>
    <ligand>
        <name>Fe cation</name>
        <dbReference type="ChEBI" id="CHEBI:24875"/>
        <label>2</label>
    </ligand>
</feature>
<feature type="binding site" evidence="1">
    <location>
        <position position="196"/>
    </location>
    <ligand>
        <name>Fe cation</name>
        <dbReference type="ChEBI" id="CHEBI:24875"/>
        <label>2</label>
    </ligand>
</feature>